<evidence type="ECO:0000250" key="1">
    <source>
        <dbReference type="UniProtKB" id="Q69Z66"/>
    </source>
</evidence>
<evidence type="ECO:0000255" key="2">
    <source>
        <dbReference type="PROSITE-ProRule" id="PRU00247"/>
    </source>
</evidence>
<evidence type="ECO:0000255" key="3">
    <source>
        <dbReference type="PROSITE-ProRule" id="PRU00624"/>
    </source>
</evidence>
<evidence type="ECO:0000255" key="4">
    <source>
        <dbReference type="PROSITE-ProRule" id="PRU01182"/>
    </source>
</evidence>
<evidence type="ECO:0000256" key="5">
    <source>
        <dbReference type="SAM" id="MobiDB-lite"/>
    </source>
</evidence>
<evidence type="ECO:0000269" key="6">
    <source>
    </source>
</evidence>
<evidence type="ECO:0000269" key="7">
    <source>
    </source>
</evidence>
<evidence type="ECO:0000269" key="8">
    <source>
    </source>
</evidence>
<evidence type="ECO:0000269" key="9">
    <source>
    </source>
</evidence>
<evidence type="ECO:0000269" key="10">
    <source>
    </source>
</evidence>
<evidence type="ECO:0000269" key="11">
    <source>
    </source>
</evidence>
<evidence type="ECO:0000269" key="12">
    <source>
    </source>
</evidence>
<evidence type="ECO:0000269" key="13">
    <source>
    </source>
</evidence>
<evidence type="ECO:0000269" key="14">
    <source>
    </source>
</evidence>
<evidence type="ECO:0000303" key="15">
    <source>
    </source>
</evidence>
<evidence type="ECO:0000303" key="16">
    <source>
    </source>
</evidence>
<evidence type="ECO:0000303" key="17">
    <source>
    </source>
</evidence>
<evidence type="ECO:0000305" key="18"/>
<evidence type="ECO:0007744" key="19">
    <source>
    </source>
</evidence>
<evidence type="ECO:0007744" key="20">
    <source>
    </source>
</evidence>
<evidence type="ECO:0007744" key="21">
    <source>
    </source>
</evidence>
<evidence type="ECO:0007744" key="22">
    <source>
    </source>
</evidence>
<evidence type="ECO:0007744" key="23">
    <source>
    </source>
</evidence>
<evidence type="ECO:0007744" key="24">
    <source>
    </source>
</evidence>
<evidence type="ECO:0007829" key="25">
    <source>
        <dbReference type="PDB" id="2CU7"/>
    </source>
</evidence>
<evidence type="ECO:0007829" key="26">
    <source>
        <dbReference type="PDB" id="2DCE"/>
    </source>
</evidence>
<sequence length="828" mass="95032">MAAEEADVDIEGDVVAAAGAQPGSGENTASVLQKDHYLDSSWRTENGLIPWTLDNTISEENRAVIEKMLLEEEYYLSKKSQPEKVWLDQKEDDKKYMKSLQKTAKIMVHSPTKPASYSVKWTIEEKELFEQGLAKFGRRWTKISKLIGSRTVLQVKSYARQYFKNKVKCGLDKETPNQKTGHNLQVKNEDKGTKAWTPSCLRGRADPNLNAVKIEKLSDDEEVDITDEVDELSSQTPQKNSSSDLLLDFPNSKMHETNQGEFITSDSQEALFSKSSRGCLQNEKQDETLSSSEITLWTEKQSNGDKKSIELNDQKFNELIKNCNKHDGRGIIVDARQLPSPEPCEIQKNLNDNEMLFHSCQMVEESHEEEELKPPEQEIEIDRNIIQEEEKQAIPEFFEGRQAKTPERYLKIRNYILDQWEICKPKYLNKTSVRPGLKNCGDVNCIGRIHTYLELIGAINFGCEQAVYNRPQTVDKVRIRDRKDAVEAYQLAQRLQSMRTRRRRVRDPWGNWCDAKDLEGQTFEHLSAEELAKRREEEKGRPVKSLKVPRPTKSSFDPFQLIPCNFFSEEKQEPFQVKVASEALLIMDLHAHVSMAEVIGLLGGRYSEVDKVVEVCAAEPCNSLSTGLQCEMDPVSQTQASETLAVRGFSVIGWYHSHPAFDPNPSLRDIDTQAKYQSYFSRGGAKFIGMIVSPYNRNNPLPYSQITCLVISEEISPDGSYRLPYKFEVQQMLEEPQWGLVFEKTRWIIEKYRLSHSSVPMDKIFRRDSDLTCLQKLLECMRKTLSKVTNCFMAEEFLTEIENLFLSNYKSNQENGVTEENCTKELLM</sequence>
<proteinExistence type="evidence at protein level"/>
<protein>
    <recommendedName>
        <fullName>Deubiquitinase MYSM1</fullName>
        <shortName>2A-DUB</shortName>
        <ecNumber evidence="14">3.4.19.-</ecNumber>
    </recommendedName>
    <alternativeName>
        <fullName>Myb-like, SWIRM and MPN domain-containing protein 1</fullName>
    </alternativeName>
</protein>
<keyword id="KW-0002">3D-structure</keyword>
<keyword id="KW-0010">Activator</keyword>
<keyword id="KW-0025">Alternative splicing</keyword>
<keyword id="KW-0156">Chromatin regulator</keyword>
<keyword id="KW-0963">Cytoplasm</keyword>
<keyword id="KW-0225">Disease variant</keyword>
<keyword id="KW-0238">DNA-binding</keyword>
<keyword id="KW-0378">Hydrolase</keyword>
<keyword id="KW-0391">Immunity</keyword>
<keyword id="KW-1017">Isopeptide bond</keyword>
<keyword id="KW-0479">Metal-binding</keyword>
<keyword id="KW-0482">Metalloprotease</keyword>
<keyword id="KW-0539">Nucleus</keyword>
<keyword id="KW-0597">Phosphoprotein</keyword>
<keyword id="KW-0645">Protease</keyword>
<keyword id="KW-1267">Proteomics identification</keyword>
<keyword id="KW-1185">Reference proteome</keyword>
<keyword id="KW-0804">Transcription</keyword>
<keyword id="KW-0805">Transcription regulation</keyword>
<keyword id="KW-0832">Ubl conjugation</keyword>
<keyword id="KW-0833">Ubl conjugation pathway</keyword>
<keyword id="KW-0862">Zinc</keyword>
<accession>Q5VVJ2</accession>
<accession>A8KA54</accession>
<accession>B3KX65</accession>
<accession>Q68DD3</accession>
<accession>Q6AI53</accession>
<accession>Q7Z3G8</accession>
<accession>Q96PX3</accession>
<gene>
    <name type="primary">MYSM1</name>
    <name type="synonym">KIAA1915</name>
</gene>
<organism>
    <name type="scientific">Homo sapiens</name>
    <name type="common">Human</name>
    <dbReference type="NCBI Taxonomy" id="9606"/>
    <lineage>
        <taxon>Eukaryota</taxon>
        <taxon>Metazoa</taxon>
        <taxon>Chordata</taxon>
        <taxon>Craniata</taxon>
        <taxon>Vertebrata</taxon>
        <taxon>Euteleostomi</taxon>
        <taxon>Mammalia</taxon>
        <taxon>Eutheria</taxon>
        <taxon>Euarchontoglires</taxon>
        <taxon>Primates</taxon>
        <taxon>Haplorrhini</taxon>
        <taxon>Catarrhini</taxon>
        <taxon>Hominidae</taxon>
        <taxon>Homo</taxon>
    </lineage>
</organism>
<dbReference type="EC" id="3.4.19.-" evidence="14"/>
<dbReference type="EMBL" id="AB067502">
    <property type="protein sequence ID" value="BAB67808.1"/>
    <property type="status" value="ALT_INIT"/>
    <property type="molecule type" value="mRNA"/>
</dbReference>
<dbReference type="EMBL" id="AK126835">
    <property type="protein sequence ID" value="BAG54377.1"/>
    <property type="status" value="ALT_INIT"/>
    <property type="molecule type" value="mRNA"/>
</dbReference>
<dbReference type="EMBL" id="AK292919">
    <property type="protein sequence ID" value="BAF85608.1"/>
    <property type="molecule type" value="mRNA"/>
</dbReference>
<dbReference type="EMBL" id="BX537912">
    <property type="protein sequence ID" value="CAD97896.1"/>
    <property type="molecule type" value="mRNA"/>
</dbReference>
<dbReference type="EMBL" id="CR627323">
    <property type="protein sequence ID" value="CAH10370.1"/>
    <property type="molecule type" value="mRNA"/>
</dbReference>
<dbReference type="EMBL" id="CR749450">
    <property type="protein sequence ID" value="CAH18287.1"/>
    <property type="molecule type" value="mRNA"/>
</dbReference>
<dbReference type="EMBL" id="AL035411">
    <property type="status" value="NOT_ANNOTATED_CDS"/>
    <property type="molecule type" value="Genomic_DNA"/>
</dbReference>
<dbReference type="EMBL" id="AL450024">
    <property type="status" value="NOT_ANNOTATED_CDS"/>
    <property type="molecule type" value="Genomic_DNA"/>
</dbReference>
<dbReference type="CCDS" id="CCDS41343.1">
    <molecule id="Q5VVJ2-1"/>
</dbReference>
<dbReference type="RefSeq" id="NP_001078956.1">
    <molecule id="Q5VVJ2-1"/>
    <property type="nucleotide sequence ID" value="NM_001085487.3"/>
</dbReference>
<dbReference type="RefSeq" id="XP_016855684.1">
    <property type="nucleotide sequence ID" value="XM_017000195.1"/>
</dbReference>
<dbReference type="RefSeq" id="XP_016855685.1">
    <property type="nucleotide sequence ID" value="XM_017000196.1"/>
</dbReference>
<dbReference type="RefSeq" id="XP_016855686.1">
    <property type="nucleotide sequence ID" value="XM_017000197.1"/>
</dbReference>
<dbReference type="RefSeq" id="XP_047299673.1">
    <molecule id="Q5VVJ2-2"/>
    <property type="nucleotide sequence ID" value="XM_047443717.1"/>
</dbReference>
<dbReference type="RefSeq" id="XP_047299674.1">
    <molecule id="Q5VVJ2-2"/>
    <property type="nucleotide sequence ID" value="XM_047443718.1"/>
</dbReference>
<dbReference type="RefSeq" id="XP_047299675.1">
    <molecule id="Q5VVJ2-2"/>
    <property type="nucleotide sequence ID" value="XM_047443719.1"/>
</dbReference>
<dbReference type="RefSeq" id="XP_054190073.1">
    <molecule id="Q5VVJ2-2"/>
    <property type="nucleotide sequence ID" value="XM_054334098.1"/>
</dbReference>
<dbReference type="RefSeq" id="XP_054190074.1">
    <molecule id="Q5VVJ2-2"/>
    <property type="nucleotide sequence ID" value="XM_054334099.1"/>
</dbReference>
<dbReference type="RefSeq" id="XP_054190075.1">
    <molecule id="Q5VVJ2-2"/>
    <property type="nucleotide sequence ID" value="XM_054334100.1"/>
</dbReference>
<dbReference type="PDB" id="2CU7">
    <property type="method" value="NMR"/>
    <property type="chains" value="A=117-181"/>
</dbReference>
<dbReference type="PDB" id="2DCE">
    <property type="method" value="NMR"/>
    <property type="chains" value="A=367-470"/>
</dbReference>
<dbReference type="PDBsum" id="2CU7"/>
<dbReference type="PDBsum" id="2DCE"/>
<dbReference type="BMRB" id="Q5VVJ2"/>
<dbReference type="SMR" id="Q5VVJ2"/>
<dbReference type="BioGRID" id="125363">
    <property type="interactions" value="50"/>
</dbReference>
<dbReference type="CORUM" id="Q5VVJ2"/>
<dbReference type="DIP" id="DIP-58941N"/>
<dbReference type="FunCoup" id="Q5VVJ2">
    <property type="interactions" value="3039"/>
</dbReference>
<dbReference type="IntAct" id="Q5VVJ2">
    <property type="interactions" value="6"/>
</dbReference>
<dbReference type="STRING" id="9606.ENSP00000418734"/>
<dbReference type="MEROPS" id="M67.005"/>
<dbReference type="GlyGen" id="Q5VVJ2">
    <property type="glycosylation" value="1 site, 1 O-linked glycan (1 site)"/>
</dbReference>
<dbReference type="iPTMnet" id="Q5VVJ2"/>
<dbReference type="PhosphoSitePlus" id="Q5VVJ2"/>
<dbReference type="BioMuta" id="MYSM1"/>
<dbReference type="DMDM" id="74756898"/>
<dbReference type="jPOST" id="Q5VVJ2"/>
<dbReference type="MassIVE" id="Q5VVJ2"/>
<dbReference type="PaxDb" id="9606-ENSP00000418734"/>
<dbReference type="PeptideAtlas" id="Q5VVJ2"/>
<dbReference type="ProteomicsDB" id="65467">
    <molecule id="Q5VVJ2-1"/>
</dbReference>
<dbReference type="ProteomicsDB" id="65468">
    <molecule id="Q5VVJ2-2"/>
</dbReference>
<dbReference type="ProteomicsDB" id="65469">
    <molecule id="Q5VVJ2-3"/>
</dbReference>
<dbReference type="Pumba" id="Q5VVJ2"/>
<dbReference type="Antibodypedia" id="46901">
    <property type="antibodies" value="273 antibodies from 30 providers"/>
</dbReference>
<dbReference type="DNASU" id="114803"/>
<dbReference type="Ensembl" id="ENST00000472487.6">
    <molecule id="Q5VVJ2-1"/>
    <property type="protein sequence ID" value="ENSP00000418734.1"/>
    <property type="gene ID" value="ENSG00000162601.12"/>
</dbReference>
<dbReference type="GeneID" id="114803"/>
<dbReference type="KEGG" id="hsa:114803"/>
<dbReference type="MANE-Select" id="ENST00000472487.6">
    <property type="protein sequence ID" value="ENSP00000418734.1"/>
    <property type="RefSeq nucleotide sequence ID" value="NM_001085487.3"/>
    <property type="RefSeq protein sequence ID" value="NP_001078956.1"/>
</dbReference>
<dbReference type="UCSC" id="uc001cza.4">
    <molecule id="Q5VVJ2-1"/>
    <property type="organism name" value="human"/>
</dbReference>
<dbReference type="AGR" id="HGNC:29401"/>
<dbReference type="CTD" id="114803"/>
<dbReference type="DisGeNET" id="114803"/>
<dbReference type="GeneCards" id="MYSM1"/>
<dbReference type="HGNC" id="HGNC:29401">
    <property type="gene designation" value="MYSM1"/>
</dbReference>
<dbReference type="HPA" id="ENSG00000162601">
    <property type="expression patterns" value="Low tissue specificity"/>
</dbReference>
<dbReference type="MalaCards" id="MYSM1"/>
<dbReference type="MIM" id="612176">
    <property type="type" value="gene"/>
</dbReference>
<dbReference type="MIM" id="618116">
    <property type="type" value="phenotype"/>
</dbReference>
<dbReference type="neXtProt" id="NX_Q5VVJ2"/>
<dbReference type="OpenTargets" id="ENSG00000162601"/>
<dbReference type="Orphanet" id="508542">
    <property type="disease" value="Congenital progressive bone marrow failure-B-cell immunodeficiency-skeletal dysplasia syndrome"/>
</dbReference>
<dbReference type="PharmGKB" id="PA142671301"/>
<dbReference type="VEuPathDB" id="HostDB:ENSG00000162601"/>
<dbReference type="eggNOG" id="KOG1279">
    <property type="taxonomic scope" value="Eukaryota"/>
</dbReference>
<dbReference type="eggNOG" id="KOG1555">
    <property type="taxonomic scope" value="Eukaryota"/>
</dbReference>
<dbReference type="GeneTree" id="ENSGT00940000157721"/>
<dbReference type="HOGENOM" id="CLU_018854_0_0_1"/>
<dbReference type="InParanoid" id="Q5VVJ2"/>
<dbReference type="OMA" id="QDHYLES"/>
<dbReference type="OrthoDB" id="7464992at2759"/>
<dbReference type="PAN-GO" id="Q5VVJ2">
    <property type="GO annotations" value="4 GO annotations based on evolutionary models"/>
</dbReference>
<dbReference type="PhylomeDB" id="Q5VVJ2"/>
<dbReference type="TreeFam" id="TF324811"/>
<dbReference type="PathwayCommons" id="Q5VVJ2"/>
<dbReference type="Reactome" id="R-HSA-5689901">
    <property type="pathway name" value="Metalloprotease DUBs"/>
</dbReference>
<dbReference type="SignaLink" id="Q5VVJ2"/>
<dbReference type="BioGRID-ORCS" id="114803">
    <property type="hits" value="33 hits in 1221 CRISPR screens"/>
</dbReference>
<dbReference type="ChiTaRS" id="MYSM1">
    <property type="organism name" value="human"/>
</dbReference>
<dbReference type="EvolutionaryTrace" id="Q5VVJ2"/>
<dbReference type="GenomeRNAi" id="114803"/>
<dbReference type="Pharos" id="Q5VVJ2">
    <property type="development level" value="Tbio"/>
</dbReference>
<dbReference type="PRO" id="PR:Q5VVJ2"/>
<dbReference type="Proteomes" id="UP000005640">
    <property type="component" value="Chromosome 1"/>
</dbReference>
<dbReference type="RNAct" id="Q5VVJ2">
    <property type="molecule type" value="protein"/>
</dbReference>
<dbReference type="Bgee" id="ENSG00000162601">
    <property type="expression patterns" value="Expressed in calcaneal tendon and 174 other cell types or tissues"/>
</dbReference>
<dbReference type="ExpressionAtlas" id="Q5VVJ2">
    <property type="expression patterns" value="baseline and differential"/>
</dbReference>
<dbReference type="GO" id="GO:0005737">
    <property type="term" value="C:cytoplasm"/>
    <property type="evidence" value="ECO:0007669"/>
    <property type="project" value="UniProtKB-SubCell"/>
</dbReference>
<dbReference type="GO" id="GO:0005730">
    <property type="term" value="C:nucleolus"/>
    <property type="evidence" value="ECO:0000314"/>
    <property type="project" value="HPA"/>
</dbReference>
<dbReference type="GO" id="GO:0005654">
    <property type="term" value="C:nucleoplasm"/>
    <property type="evidence" value="ECO:0000314"/>
    <property type="project" value="HPA"/>
</dbReference>
<dbReference type="GO" id="GO:0005634">
    <property type="term" value="C:nucleus"/>
    <property type="evidence" value="ECO:0000314"/>
    <property type="project" value="UniProtKB"/>
</dbReference>
<dbReference type="GO" id="GO:0032991">
    <property type="term" value="C:protein-containing complex"/>
    <property type="evidence" value="ECO:0000353"/>
    <property type="project" value="UniProtKB"/>
</dbReference>
<dbReference type="GO" id="GO:0003677">
    <property type="term" value="F:DNA binding"/>
    <property type="evidence" value="ECO:0007669"/>
    <property type="project" value="UniProtKB-KW"/>
</dbReference>
<dbReference type="GO" id="GO:0042393">
    <property type="term" value="F:histone binding"/>
    <property type="evidence" value="ECO:0000314"/>
    <property type="project" value="UniProtKB"/>
</dbReference>
<dbReference type="GO" id="GO:0140950">
    <property type="term" value="F:histone H2A deubiquitinase activity"/>
    <property type="evidence" value="ECO:0000315"/>
    <property type="project" value="UniProtKB"/>
</dbReference>
<dbReference type="GO" id="GO:0046872">
    <property type="term" value="F:metal ion binding"/>
    <property type="evidence" value="ECO:0007669"/>
    <property type="project" value="UniProtKB-KW"/>
</dbReference>
<dbReference type="GO" id="GO:0140492">
    <property type="term" value="F:metal-dependent deubiquitinase activity"/>
    <property type="evidence" value="ECO:0000314"/>
    <property type="project" value="UniProtKB"/>
</dbReference>
<dbReference type="GO" id="GO:0003713">
    <property type="term" value="F:transcription coactivator activity"/>
    <property type="evidence" value="ECO:0000314"/>
    <property type="project" value="UniProtKB"/>
</dbReference>
<dbReference type="GO" id="GO:0006338">
    <property type="term" value="P:chromatin remodeling"/>
    <property type="evidence" value="ECO:0000315"/>
    <property type="project" value="UniProtKB"/>
</dbReference>
<dbReference type="GO" id="GO:0002376">
    <property type="term" value="P:immune system process"/>
    <property type="evidence" value="ECO:0007669"/>
    <property type="project" value="UniProtKB-KW"/>
</dbReference>
<dbReference type="GO" id="GO:0043473">
    <property type="term" value="P:pigmentation"/>
    <property type="evidence" value="ECO:0007669"/>
    <property type="project" value="Ensembl"/>
</dbReference>
<dbReference type="GO" id="GO:0045944">
    <property type="term" value="P:positive regulation of transcription by RNA polymerase II"/>
    <property type="evidence" value="ECO:0000315"/>
    <property type="project" value="UniProtKB"/>
</dbReference>
<dbReference type="GO" id="GO:0006508">
    <property type="term" value="P:proteolysis"/>
    <property type="evidence" value="ECO:0007669"/>
    <property type="project" value="UniProtKB-KW"/>
</dbReference>
<dbReference type="GO" id="GO:0030334">
    <property type="term" value="P:regulation of cell migration"/>
    <property type="evidence" value="ECO:0007669"/>
    <property type="project" value="Ensembl"/>
</dbReference>
<dbReference type="GO" id="GO:0051797">
    <property type="term" value="P:regulation of hair follicle development"/>
    <property type="evidence" value="ECO:0007669"/>
    <property type="project" value="Ensembl"/>
</dbReference>
<dbReference type="GO" id="GO:1903706">
    <property type="term" value="P:regulation of hemopoiesis"/>
    <property type="evidence" value="ECO:0000315"/>
    <property type="project" value="UniProtKB"/>
</dbReference>
<dbReference type="CDD" id="cd08067">
    <property type="entry name" value="MPN_2A_DUB"/>
    <property type="match status" value="1"/>
</dbReference>
<dbReference type="CDD" id="cd00167">
    <property type="entry name" value="SANT"/>
    <property type="match status" value="1"/>
</dbReference>
<dbReference type="FunFam" id="1.10.10.10:FF:000193">
    <property type="entry name" value="histone H2A deubiquitinase MYSM1 isoform X1"/>
    <property type="match status" value="1"/>
</dbReference>
<dbReference type="FunFam" id="1.10.10.60:FF:000151">
    <property type="entry name" value="histone H2A deubiquitinase MYSM1 isoform X2"/>
    <property type="match status" value="1"/>
</dbReference>
<dbReference type="FunFam" id="3.40.140.10:FF:000018">
    <property type="entry name" value="histone H2A deubiquitinase MYSM1 isoform X2"/>
    <property type="match status" value="1"/>
</dbReference>
<dbReference type="Gene3D" id="3.40.140.10">
    <property type="entry name" value="Cytidine Deaminase, domain 2"/>
    <property type="match status" value="1"/>
</dbReference>
<dbReference type="Gene3D" id="1.10.10.60">
    <property type="entry name" value="Homeodomain-like"/>
    <property type="match status" value="1"/>
</dbReference>
<dbReference type="Gene3D" id="1.10.10.10">
    <property type="entry name" value="Winged helix-like DNA-binding domain superfamily/Winged helix DNA-binding domain"/>
    <property type="match status" value="1"/>
</dbReference>
<dbReference type="InterPro" id="IPR009057">
    <property type="entry name" value="Homeodomain-like_sf"/>
</dbReference>
<dbReference type="InterPro" id="IPR000555">
    <property type="entry name" value="JAMM/MPN+_dom"/>
</dbReference>
<dbReference type="InterPro" id="IPR050242">
    <property type="entry name" value="JAMM_MPN+_peptidase_M67A"/>
</dbReference>
<dbReference type="InterPro" id="IPR037518">
    <property type="entry name" value="MPN"/>
</dbReference>
<dbReference type="InterPro" id="IPR017930">
    <property type="entry name" value="Myb_dom"/>
</dbReference>
<dbReference type="InterPro" id="IPR001005">
    <property type="entry name" value="SANT/Myb"/>
</dbReference>
<dbReference type="InterPro" id="IPR017884">
    <property type="entry name" value="SANT_dom"/>
</dbReference>
<dbReference type="InterPro" id="IPR007526">
    <property type="entry name" value="SWIRM"/>
</dbReference>
<dbReference type="InterPro" id="IPR036388">
    <property type="entry name" value="WH-like_DNA-bd_sf"/>
</dbReference>
<dbReference type="PANTHER" id="PTHR10410">
    <property type="entry name" value="EUKARYOTIC TRANSLATION INITIATION FACTOR 3 -RELATED"/>
    <property type="match status" value="1"/>
</dbReference>
<dbReference type="Pfam" id="PF01398">
    <property type="entry name" value="JAB"/>
    <property type="match status" value="1"/>
</dbReference>
<dbReference type="Pfam" id="PF00249">
    <property type="entry name" value="Myb_DNA-binding"/>
    <property type="match status" value="1"/>
</dbReference>
<dbReference type="Pfam" id="PF04433">
    <property type="entry name" value="SWIRM"/>
    <property type="match status" value="1"/>
</dbReference>
<dbReference type="SMART" id="SM00232">
    <property type="entry name" value="JAB_MPN"/>
    <property type="match status" value="1"/>
</dbReference>
<dbReference type="SMART" id="SM00717">
    <property type="entry name" value="SANT"/>
    <property type="match status" value="1"/>
</dbReference>
<dbReference type="SUPFAM" id="SSF46689">
    <property type="entry name" value="Homeodomain-like"/>
    <property type="match status" value="2"/>
</dbReference>
<dbReference type="SUPFAM" id="SSF102712">
    <property type="entry name" value="JAB1/MPN domain"/>
    <property type="match status" value="1"/>
</dbReference>
<dbReference type="PROSITE" id="PS50249">
    <property type="entry name" value="MPN"/>
    <property type="match status" value="1"/>
</dbReference>
<dbReference type="PROSITE" id="PS51293">
    <property type="entry name" value="SANT"/>
    <property type="match status" value="1"/>
</dbReference>
<dbReference type="PROSITE" id="PS50934">
    <property type="entry name" value="SWIRM"/>
    <property type="match status" value="1"/>
</dbReference>
<feature type="chain" id="PRO_0000234073" description="Deubiquitinase MYSM1">
    <location>
        <begin position="1"/>
        <end position="828"/>
    </location>
</feature>
<feature type="domain" description="SANT" evidence="3">
    <location>
        <begin position="116"/>
        <end position="167"/>
    </location>
</feature>
<feature type="domain" description="SWIRM" evidence="2">
    <location>
        <begin position="372"/>
        <end position="470"/>
    </location>
</feature>
<feature type="domain" description="MPN" evidence="4">
    <location>
        <begin position="577"/>
        <end position="709"/>
    </location>
</feature>
<feature type="region of interest" description="Disordered" evidence="5">
    <location>
        <begin position="1"/>
        <end position="31"/>
    </location>
</feature>
<feature type="short sequence motif" description="JAMM motif" evidence="4">
    <location>
        <begin position="656"/>
        <end position="669"/>
    </location>
</feature>
<feature type="short sequence motif" description="LXXLL motif">
    <location>
        <begin position="774"/>
        <end position="778"/>
    </location>
</feature>
<feature type="compositionally biased region" description="Acidic residues" evidence="5">
    <location>
        <begin position="1"/>
        <end position="12"/>
    </location>
</feature>
<feature type="binding site" evidence="4">
    <location>
        <position position="656"/>
    </location>
    <ligand>
        <name>Zn(2+)</name>
        <dbReference type="ChEBI" id="CHEBI:29105"/>
        <note>catalytic</note>
    </ligand>
</feature>
<feature type="binding site" evidence="4">
    <location>
        <position position="658"/>
    </location>
    <ligand>
        <name>Zn(2+)</name>
        <dbReference type="ChEBI" id="CHEBI:29105"/>
        <note>catalytic</note>
    </ligand>
</feature>
<feature type="binding site" evidence="4">
    <location>
        <position position="669"/>
    </location>
    <ligand>
        <name>Zn(2+)</name>
        <dbReference type="ChEBI" id="CHEBI:29105"/>
        <note>catalytic</note>
    </ligand>
</feature>
<feature type="modified residue" description="Phosphoserine" evidence="23">
    <location>
        <position position="110"/>
    </location>
</feature>
<feature type="modified residue" description="Phosphoserine" evidence="19 20 21 23">
    <location>
        <position position="218"/>
    </location>
</feature>
<feature type="modified residue" description="Phosphothreonine" evidence="21">
    <location>
        <position position="236"/>
    </location>
</feature>
<feature type="modified residue" description="Phosphoserine" evidence="23">
    <location>
        <position position="242"/>
    </location>
</feature>
<feature type="modified residue" description="Phosphoserine" evidence="23">
    <location>
        <position position="267"/>
    </location>
</feature>
<feature type="modified residue" description="Phosphoserine" evidence="22">
    <location>
        <position position="340"/>
    </location>
</feature>
<feature type="cross-link" description="Glycyl lysine isopeptide (Lys-Gly) (interchain with G-Cter in SUMO2)" evidence="24">
    <location>
        <position position="187"/>
    </location>
</feature>
<feature type="splice variant" id="VSP_018210" description="In isoform 3." evidence="16 17">
    <location>
        <begin position="1"/>
        <end position="594"/>
    </location>
</feature>
<feature type="splice variant" id="VSP_018211" description="In isoform 2." evidence="15">
    <location>
        <begin position="1"/>
        <end position="253"/>
    </location>
</feature>
<feature type="sequence variant" id="VAR_051814" description="In dbSNP:rs17118103.">
    <original>C</original>
    <variation>S</variation>
    <location>
        <position position="200"/>
    </location>
</feature>
<feature type="sequence variant" id="VAR_051815" description="In dbSNP:rs12139511." evidence="6 7">
    <original>T</original>
    <variation>A</variation>
    <location>
        <position position="264"/>
    </location>
</feature>
<feature type="sequence variant" id="VAR_081184" description="In BMFS4." evidence="11 13">
    <location>
        <begin position="390"/>
        <end position="828"/>
    </location>
</feature>
<feature type="sequence variant" id="VAR_081185" description="In BMFS4; dbSNP:rs1557507208." evidence="12">
    <original>H</original>
    <variation>R</variation>
    <location>
        <position position="656"/>
    </location>
</feature>
<feature type="sequence variant" id="VAR_051816" description="In dbSNP:rs232777.">
    <original>E</original>
    <variation>K</variation>
    <location>
        <position position="825"/>
    </location>
</feature>
<feature type="mutagenesis site" description="Abolishes H2A deubiquitination." evidence="8">
    <original>D</original>
    <variation>N</variation>
    <location>
        <position position="669"/>
    </location>
</feature>
<feature type="sequence conflict" description="In Ref. 2; BAG54377." evidence="18" ref="2">
    <original>E</original>
    <variation>G</variation>
    <location>
        <position position="231"/>
    </location>
</feature>
<feature type="sequence conflict" description="In Ref. 2; BAG54377." evidence="18" ref="2">
    <original>G</original>
    <variation>D</variation>
    <location>
        <position position="540"/>
    </location>
</feature>
<feature type="sequence conflict" description="In Ref. 3; CAH18287." evidence="18" ref="3">
    <original>R</original>
    <variation>G</variation>
    <location>
        <position position="782"/>
    </location>
</feature>
<feature type="helix" evidence="25">
    <location>
        <begin position="123"/>
        <end position="135"/>
    </location>
</feature>
<feature type="helix" evidence="25">
    <location>
        <begin position="140"/>
        <end position="147"/>
    </location>
</feature>
<feature type="strand" evidence="25">
    <location>
        <begin position="148"/>
        <end position="150"/>
    </location>
</feature>
<feature type="helix" evidence="25">
    <location>
        <begin position="152"/>
        <end position="166"/>
    </location>
</feature>
<feature type="helix" evidence="26">
    <location>
        <begin position="388"/>
        <end position="391"/>
    </location>
</feature>
<feature type="helix" evidence="26">
    <location>
        <begin position="395"/>
        <end position="398"/>
    </location>
</feature>
<feature type="helix" evidence="26">
    <location>
        <begin position="406"/>
        <end position="423"/>
    </location>
</feature>
<feature type="helix" evidence="26">
    <location>
        <begin position="430"/>
        <end position="432"/>
    </location>
</feature>
<feature type="turn" evidence="26">
    <location>
        <begin position="433"/>
        <end position="437"/>
    </location>
</feature>
<feature type="strand" evidence="26">
    <location>
        <begin position="438"/>
        <end position="441"/>
    </location>
</feature>
<feature type="helix" evidence="26">
    <location>
        <begin position="443"/>
        <end position="456"/>
    </location>
</feature>
<feature type="strand" evidence="26">
    <location>
        <begin position="457"/>
        <end position="460"/>
    </location>
</feature>
<feature type="strand" evidence="26">
    <location>
        <begin position="466"/>
        <end position="468"/>
    </location>
</feature>
<reference key="1">
    <citation type="journal article" date="2001" name="DNA Res.">
        <title>Prediction of the coding sequences of unidentified human genes. XXI. The complete sequences of 60 new cDNA clones from brain which code for large proteins.</title>
        <authorList>
            <person name="Nagase T."/>
            <person name="Kikuno R."/>
            <person name="Ohara O."/>
        </authorList>
    </citation>
    <scope>NUCLEOTIDE SEQUENCE [LARGE SCALE MRNA] (ISOFORM 2)</scope>
    <scope>VARIANT ALA-264</scope>
    <source>
        <tissue>Brain</tissue>
    </source>
</reference>
<reference key="2">
    <citation type="journal article" date="2004" name="Nat. Genet.">
        <title>Complete sequencing and characterization of 21,243 full-length human cDNAs.</title>
        <authorList>
            <person name="Ota T."/>
            <person name="Suzuki Y."/>
            <person name="Nishikawa T."/>
            <person name="Otsuki T."/>
            <person name="Sugiyama T."/>
            <person name="Irie R."/>
            <person name="Wakamatsu A."/>
            <person name="Hayashi K."/>
            <person name="Sato H."/>
            <person name="Nagai K."/>
            <person name="Kimura K."/>
            <person name="Makita H."/>
            <person name="Sekine M."/>
            <person name="Obayashi M."/>
            <person name="Nishi T."/>
            <person name="Shibahara T."/>
            <person name="Tanaka T."/>
            <person name="Ishii S."/>
            <person name="Yamamoto J."/>
            <person name="Saito K."/>
            <person name="Kawai Y."/>
            <person name="Isono Y."/>
            <person name="Nakamura Y."/>
            <person name="Nagahari K."/>
            <person name="Murakami K."/>
            <person name="Yasuda T."/>
            <person name="Iwayanagi T."/>
            <person name="Wagatsuma M."/>
            <person name="Shiratori A."/>
            <person name="Sudo H."/>
            <person name="Hosoiri T."/>
            <person name="Kaku Y."/>
            <person name="Kodaira H."/>
            <person name="Kondo H."/>
            <person name="Sugawara M."/>
            <person name="Takahashi M."/>
            <person name="Kanda K."/>
            <person name="Yokoi T."/>
            <person name="Furuya T."/>
            <person name="Kikkawa E."/>
            <person name="Omura Y."/>
            <person name="Abe K."/>
            <person name="Kamihara K."/>
            <person name="Katsuta N."/>
            <person name="Sato K."/>
            <person name="Tanikawa M."/>
            <person name="Yamazaki M."/>
            <person name="Ninomiya K."/>
            <person name="Ishibashi T."/>
            <person name="Yamashita H."/>
            <person name="Murakawa K."/>
            <person name="Fujimori K."/>
            <person name="Tanai H."/>
            <person name="Kimata M."/>
            <person name="Watanabe M."/>
            <person name="Hiraoka S."/>
            <person name="Chiba Y."/>
            <person name="Ishida S."/>
            <person name="Ono Y."/>
            <person name="Takiguchi S."/>
            <person name="Watanabe S."/>
            <person name="Yosida M."/>
            <person name="Hotuta T."/>
            <person name="Kusano J."/>
            <person name="Kanehori K."/>
            <person name="Takahashi-Fujii A."/>
            <person name="Hara H."/>
            <person name="Tanase T.-O."/>
            <person name="Nomura Y."/>
            <person name="Togiya S."/>
            <person name="Komai F."/>
            <person name="Hara R."/>
            <person name="Takeuchi K."/>
            <person name="Arita M."/>
            <person name="Imose N."/>
            <person name="Musashino K."/>
            <person name="Yuuki H."/>
            <person name="Oshima A."/>
            <person name="Sasaki N."/>
            <person name="Aotsuka S."/>
            <person name="Yoshikawa Y."/>
            <person name="Matsunawa H."/>
            <person name="Ichihara T."/>
            <person name="Shiohata N."/>
            <person name="Sano S."/>
            <person name="Moriya S."/>
            <person name="Momiyama H."/>
            <person name="Satoh N."/>
            <person name="Takami S."/>
            <person name="Terashima Y."/>
            <person name="Suzuki O."/>
            <person name="Nakagawa S."/>
            <person name="Senoh A."/>
            <person name="Mizoguchi H."/>
            <person name="Goto Y."/>
            <person name="Shimizu F."/>
            <person name="Wakebe H."/>
            <person name="Hishigaki H."/>
            <person name="Watanabe T."/>
            <person name="Sugiyama A."/>
            <person name="Takemoto M."/>
            <person name="Kawakami B."/>
            <person name="Yamazaki M."/>
            <person name="Watanabe K."/>
            <person name="Kumagai A."/>
            <person name="Itakura S."/>
            <person name="Fukuzumi Y."/>
            <person name="Fujimori Y."/>
            <person name="Komiyama M."/>
            <person name="Tashiro H."/>
            <person name="Tanigami A."/>
            <person name="Fujiwara T."/>
            <person name="Ono T."/>
            <person name="Yamada K."/>
            <person name="Fujii Y."/>
            <person name="Ozaki K."/>
            <person name="Hirao M."/>
            <person name="Ohmori Y."/>
            <person name="Kawabata A."/>
            <person name="Hikiji T."/>
            <person name="Kobatake N."/>
            <person name="Inagaki H."/>
            <person name="Ikema Y."/>
            <person name="Okamoto S."/>
            <person name="Okitani R."/>
            <person name="Kawakami T."/>
            <person name="Noguchi S."/>
            <person name="Itoh T."/>
            <person name="Shigeta K."/>
            <person name="Senba T."/>
            <person name="Matsumura K."/>
            <person name="Nakajima Y."/>
            <person name="Mizuno T."/>
            <person name="Morinaga M."/>
            <person name="Sasaki M."/>
            <person name="Togashi T."/>
            <person name="Oyama M."/>
            <person name="Hata H."/>
            <person name="Watanabe M."/>
            <person name="Komatsu T."/>
            <person name="Mizushima-Sugano J."/>
            <person name="Satoh T."/>
            <person name="Shirai Y."/>
            <person name="Takahashi Y."/>
            <person name="Nakagawa K."/>
            <person name="Okumura K."/>
            <person name="Nagase T."/>
            <person name="Nomura N."/>
            <person name="Kikuchi H."/>
            <person name="Masuho Y."/>
            <person name="Yamashita R."/>
            <person name="Nakai K."/>
            <person name="Yada T."/>
            <person name="Nakamura Y."/>
            <person name="Ohara O."/>
            <person name="Isogai T."/>
            <person name="Sugano S."/>
        </authorList>
    </citation>
    <scope>NUCLEOTIDE SEQUENCE [LARGE SCALE MRNA] (ISOFORM 3)</scope>
    <scope>NUCLEOTIDE SEQUENCE [LARGE SCALE MRNA] OF 144-828 (ISOFORM 1)</scope>
    <scope>VARIANT ALA-264</scope>
    <source>
        <tissue>Trachea</tissue>
    </source>
</reference>
<reference key="3">
    <citation type="journal article" date="2007" name="BMC Genomics">
        <title>The full-ORF clone resource of the German cDNA consortium.</title>
        <authorList>
            <person name="Bechtel S."/>
            <person name="Rosenfelder H."/>
            <person name="Duda A."/>
            <person name="Schmidt C.P."/>
            <person name="Ernst U."/>
            <person name="Wellenreuther R."/>
            <person name="Mehrle A."/>
            <person name="Schuster C."/>
            <person name="Bahr A."/>
            <person name="Bloecker H."/>
            <person name="Heubner D."/>
            <person name="Hoerlein A."/>
            <person name="Michel G."/>
            <person name="Wedler H."/>
            <person name="Koehrer K."/>
            <person name="Ottenwaelder B."/>
            <person name="Poustka A."/>
            <person name="Wiemann S."/>
            <person name="Schupp I."/>
        </authorList>
    </citation>
    <scope>NUCLEOTIDE SEQUENCE [LARGE SCALE MRNA] (ISOFORM 3)</scope>
    <scope>NUCLEOTIDE SEQUENCE [LARGE SCALE MRNA] OF 1-133 (ISOFORM 1)</scope>
    <source>
        <tissue>Fetal skin</tissue>
        <tissue>Liver</tissue>
    </source>
</reference>
<reference key="4">
    <citation type="journal article" date="2006" name="Nature">
        <title>The DNA sequence and biological annotation of human chromosome 1.</title>
        <authorList>
            <person name="Gregory S.G."/>
            <person name="Barlow K.F."/>
            <person name="McLay K.E."/>
            <person name="Kaul R."/>
            <person name="Swarbreck D."/>
            <person name="Dunham A."/>
            <person name="Scott C.E."/>
            <person name="Howe K.L."/>
            <person name="Woodfine K."/>
            <person name="Spencer C.C.A."/>
            <person name="Jones M.C."/>
            <person name="Gillson C."/>
            <person name="Searle S."/>
            <person name="Zhou Y."/>
            <person name="Kokocinski F."/>
            <person name="McDonald L."/>
            <person name="Evans R."/>
            <person name="Phillips K."/>
            <person name="Atkinson A."/>
            <person name="Cooper R."/>
            <person name="Jones C."/>
            <person name="Hall R.E."/>
            <person name="Andrews T.D."/>
            <person name="Lloyd C."/>
            <person name="Ainscough R."/>
            <person name="Almeida J.P."/>
            <person name="Ambrose K.D."/>
            <person name="Anderson F."/>
            <person name="Andrew R.W."/>
            <person name="Ashwell R.I.S."/>
            <person name="Aubin K."/>
            <person name="Babbage A.K."/>
            <person name="Bagguley C.L."/>
            <person name="Bailey J."/>
            <person name="Beasley H."/>
            <person name="Bethel G."/>
            <person name="Bird C.P."/>
            <person name="Bray-Allen S."/>
            <person name="Brown J.Y."/>
            <person name="Brown A.J."/>
            <person name="Buckley D."/>
            <person name="Burton J."/>
            <person name="Bye J."/>
            <person name="Carder C."/>
            <person name="Chapman J.C."/>
            <person name="Clark S.Y."/>
            <person name="Clarke G."/>
            <person name="Clee C."/>
            <person name="Cobley V."/>
            <person name="Collier R.E."/>
            <person name="Corby N."/>
            <person name="Coville G.J."/>
            <person name="Davies J."/>
            <person name="Deadman R."/>
            <person name="Dunn M."/>
            <person name="Earthrowl M."/>
            <person name="Ellington A.G."/>
            <person name="Errington H."/>
            <person name="Frankish A."/>
            <person name="Frankland J."/>
            <person name="French L."/>
            <person name="Garner P."/>
            <person name="Garnett J."/>
            <person name="Gay L."/>
            <person name="Ghori M.R.J."/>
            <person name="Gibson R."/>
            <person name="Gilby L.M."/>
            <person name="Gillett W."/>
            <person name="Glithero R.J."/>
            <person name="Grafham D.V."/>
            <person name="Griffiths C."/>
            <person name="Griffiths-Jones S."/>
            <person name="Grocock R."/>
            <person name="Hammond S."/>
            <person name="Harrison E.S.I."/>
            <person name="Hart E."/>
            <person name="Haugen E."/>
            <person name="Heath P.D."/>
            <person name="Holmes S."/>
            <person name="Holt K."/>
            <person name="Howden P.J."/>
            <person name="Hunt A.R."/>
            <person name="Hunt S.E."/>
            <person name="Hunter G."/>
            <person name="Isherwood J."/>
            <person name="James R."/>
            <person name="Johnson C."/>
            <person name="Johnson D."/>
            <person name="Joy A."/>
            <person name="Kay M."/>
            <person name="Kershaw J.K."/>
            <person name="Kibukawa M."/>
            <person name="Kimberley A.M."/>
            <person name="King A."/>
            <person name="Knights A.J."/>
            <person name="Lad H."/>
            <person name="Laird G."/>
            <person name="Lawlor S."/>
            <person name="Leongamornlert D.A."/>
            <person name="Lloyd D.M."/>
            <person name="Loveland J."/>
            <person name="Lovell J."/>
            <person name="Lush M.J."/>
            <person name="Lyne R."/>
            <person name="Martin S."/>
            <person name="Mashreghi-Mohammadi M."/>
            <person name="Matthews L."/>
            <person name="Matthews N.S.W."/>
            <person name="McLaren S."/>
            <person name="Milne S."/>
            <person name="Mistry S."/>
            <person name="Moore M.J.F."/>
            <person name="Nickerson T."/>
            <person name="O'Dell C.N."/>
            <person name="Oliver K."/>
            <person name="Palmeiri A."/>
            <person name="Palmer S.A."/>
            <person name="Parker A."/>
            <person name="Patel D."/>
            <person name="Pearce A.V."/>
            <person name="Peck A.I."/>
            <person name="Pelan S."/>
            <person name="Phelps K."/>
            <person name="Phillimore B.J."/>
            <person name="Plumb R."/>
            <person name="Rajan J."/>
            <person name="Raymond C."/>
            <person name="Rouse G."/>
            <person name="Saenphimmachak C."/>
            <person name="Sehra H.K."/>
            <person name="Sheridan E."/>
            <person name="Shownkeen R."/>
            <person name="Sims S."/>
            <person name="Skuce C.D."/>
            <person name="Smith M."/>
            <person name="Steward C."/>
            <person name="Subramanian S."/>
            <person name="Sycamore N."/>
            <person name="Tracey A."/>
            <person name="Tromans A."/>
            <person name="Van Helmond Z."/>
            <person name="Wall M."/>
            <person name="Wallis J.M."/>
            <person name="White S."/>
            <person name="Whitehead S.L."/>
            <person name="Wilkinson J.E."/>
            <person name="Willey D.L."/>
            <person name="Williams H."/>
            <person name="Wilming L."/>
            <person name="Wray P.W."/>
            <person name="Wu Z."/>
            <person name="Coulson A."/>
            <person name="Vaudin M."/>
            <person name="Sulston J.E."/>
            <person name="Durbin R.M."/>
            <person name="Hubbard T."/>
            <person name="Wooster R."/>
            <person name="Dunham I."/>
            <person name="Carter N.P."/>
            <person name="McVean G."/>
            <person name="Ross M.T."/>
            <person name="Harrow J."/>
            <person name="Olson M.V."/>
            <person name="Beck S."/>
            <person name="Rogers J."/>
            <person name="Bentley D.R."/>
        </authorList>
    </citation>
    <scope>NUCLEOTIDE SEQUENCE [LARGE SCALE GENOMIC DNA]</scope>
</reference>
<reference key="5">
    <citation type="journal article" date="2007" name="Mol. Cell">
        <title>A histone H2A deubiquitinase complex coordinating histone acetylation and H1 dissociation in transcriptional regulation.</title>
        <authorList>
            <person name="Zhu P."/>
            <person name="Zhou W."/>
            <person name="Wang J."/>
            <person name="Puc J."/>
            <person name="Ohgi K.A."/>
            <person name="Erdjument-Bromage H."/>
            <person name="Tempst P."/>
            <person name="Glass C.K."/>
            <person name="Rosenfeld M.G."/>
        </authorList>
    </citation>
    <scope>FUNCTION</scope>
    <scope>SUBCELLULAR LOCATION</scope>
    <scope>IDENTIFICATION IN COMPLEX</scope>
    <scope>MUTAGENESIS OF ASP-669</scope>
</reference>
<reference key="6">
    <citation type="journal article" date="2007" name="Science">
        <title>ATM and ATR substrate analysis reveals extensive protein networks responsive to DNA damage.</title>
        <authorList>
            <person name="Matsuoka S."/>
            <person name="Ballif B.A."/>
            <person name="Smogorzewska A."/>
            <person name="McDonald E.R. III"/>
            <person name="Hurov K.E."/>
            <person name="Luo J."/>
            <person name="Bakalarski C.E."/>
            <person name="Zhao Z."/>
            <person name="Solimini N."/>
            <person name="Lerenthal Y."/>
            <person name="Shiloh Y."/>
            <person name="Gygi S.P."/>
            <person name="Elledge S.J."/>
        </authorList>
    </citation>
    <scope>PHOSPHORYLATION [LARGE SCALE ANALYSIS] AT SER-218</scope>
    <scope>IDENTIFICATION BY MASS SPECTROMETRY [LARGE SCALE ANALYSIS]</scope>
    <source>
        <tissue>Embryonic kidney</tissue>
    </source>
</reference>
<reference key="7">
    <citation type="journal article" date="2008" name="Proc. Natl. Acad. Sci. U.S.A.">
        <title>A quantitative atlas of mitotic phosphorylation.</title>
        <authorList>
            <person name="Dephoure N."/>
            <person name="Zhou C."/>
            <person name="Villen J."/>
            <person name="Beausoleil S.A."/>
            <person name="Bakalarski C.E."/>
            <person name="Elledge S.J."/>
            <person name="Gygi S.P."/>
        </authorList>
    </citation>
    <scope>PHOSPHORYLATION [LARGE SCALE ANALYSIS] AT SER-218</scope>
    <scope>IDENTIFICATION BY MASS SPECTROMETRY [LARGE SCALE ANALYSIS]</scope>
    <source>
        <tissue>Cervix carcinoma</tissue>
    </source>
</reference>
<reference key="8">
    <citation type="journal article" date="2009" name="Sci. Signal.">
        <title>Quantitative phosphoproteomic analysis of T cell receptor signaling reveals system-wide modulation of protein-protein interactions.</title>
        <authorList>
            <person name="Mayya V."/>
            <person name="Lundgren D.H."/>
            <person name="Hwang S.-I."/>
            <person name="Rezaul K."/>
            <person name="Wu L."/>
            <person name="Eng J.K."/>
            <person name="Rodionov V."/>
            <person name="Han D.K."/>
        </authorList>
    </citation>
    <scope>PHOSPHORYLATION [LARGE SCALE ANALYSIS] AT SER-218 AND THR-236</scope>
    <scope>IDENTIFICATION BY MASS SPECTROMETRY [LARGE SCALE ANALYSIS]</scope>
    <source>
        <tissue>Leukemic T-cell</tissue>
    </source>
</reference>
<reference key="9">
    <citation type="journal article" date="2011" name="Immunity">
        <title>Control of B cell development by the histone H2A deubiquitinase MYSM1.</title>
        <authorList>
            <person name="Jiang X.X."/>
            <person name="Nguyen Q."/>
            <person name="Chou Y."/>
            <person name="Wang T."/>
            <person name="Nandakumar V."/>
            <person name="Yates P."/>
            <person name="Jones L."/>
            <person name="Wang L."/>
            <person name="Won H."/>
            <person name="Lee H.R."/>
            <person name="Jung J.U."/>
            <person name="Mueschen M."/>
            <person name="Huang X.F."/>
            <person name="Chen S.Y."/>
        </authorList>
    </citation>
    <scope>FUNCTION</scope>
</reference>
<reference key="10">
    <citation type="journal article" date="2011" name="Sci. Signal.">
        <title>System-wide temporal characterization of the proteome and phosphoproteome of human embryonic stem cell differentiation.</title>
        <authorList>
            <person name="Rigbolt K.T."/>
            <person name="Prokhorova T.A."/>
            <person name="Akimov V."/>
            <person name="Henningsen J."/>
            <person name="Johansen P.T."/>
            <person name="Kratchmarova I."/>
            <person name="Kassem M."/>
            <person name="Mann M."/>
            <person name="Olsen J.V."/>
            <person name="Blagoev B."/>
        </authorList>
    </citation>
    <scope>PHOSPHORYLATION [LARGE SCALE ANALYSIS] AT SER-340</scope>
    <scope>IDENTIFICATION BY MASS SPECTROMETRY [LARGE SCALE ANALYSIS]</scope>
</reference>
<reference key="11">
    <citation type="journal article" date="2013" name="Blood">
        <title>MYSM1 is mutated in a family with transient transfusion-dependent anemia, mild thrombocytopenia, and low NK- and B-cell counts.</title>
        <authorList>
            <person name="Alsultan A."/>
            <person name="Shamseldin H.E."/>
            <person name="Osman M.E."/>
            <person name="Aljabri M."/>
            <person name="Alkuraya F.S."/>
        </authorList>
    </citation>
    <scope>INVOLVEMENT IN BMFS4</scope>
    <scope>VARIANT BMFS4 390-GLU--MET-828 DEL</scope>
</reference>
<reference key="12">
    <citation type="journal article" date="2013" name="Proc. Natl. Acad. Sci. U.S.A.">
        <title>Epigenetic control of natural killer cell maturation by histone H2A deubiquitinase, MYSM1.</title>
        <authorList>
            <person name="Nandakumar V."/>
            <person name="Chou Y."/>
            <person name="Zang L."/>
            <person name="Huang X.F."/>
            <person name="Chen S.Y."/>
        </authorList>
    </citation>
    <scope>FUNCTION</scope>
    <scope>INTERACTION WITH NFIL3</scope>
</reference>
<reference key="13">
    <citation type="journal article" date="2013" name="J. Proteome Res.">
        <title>Toward a comprehensive characterization of a human cancer cell phosphoproteome.</title>
        <authorList>
            <person name="Zhou H."/>
            <person name="Di Palma S."/>
            <person name="Preisinger C."/>
            <person name="Peng M."/>
            <person name="Polat A.N."/>
            <person name="Heck A.J."/>
            <person name="Mohammed S."/>
        </authorList>
    </citation>
    <scope>PHOSPHORYLATION [LARGE SCALE ANALYSIS] AT SER-110; SER-218; SER-242 AND SER-267</scope>
    <scope>IDENTIFICATION BY MASS SPECTROMETRY [LARGE SCALE ANALYSIS]</scope>
    <source>
        <tissue>Cervix carcinoma</tissue>
        <tissue>Erythroleukemia</tissue>
    </source>
</reference>
<reference key="14">
    <citation type="journal article" date="2015" name="J. Allergy Clin. Immunol.">
        <title>An in vivo genetic reversion highlights the crucial role of Myb-Like, SWIRM, and MPN domains 1 (MYSM1) in human hematopoiesis and lymphocyte differentiation.</title>
        <authorList>
            <person name="Le Guen T."/>
            <person name="Touzot F."/>
            <person name="Andre-Schmutz I."/>
            <person name="Lagresle-Peyrou C."/>
            <person name="France B."/>
            <person name="Kermasson L."/>
            <person name="Lambert N."/>
            <person name="Picard C."/>
            <person name="Nitschke P."/>
            <person name="Carpentier W."/>
            <person name="Bole-Feysot C."/>
            <person name="Lim A."/>
            <person name="Cavazzana M."/>
            <person name="Callebaut I."/>
            <person name="Soulier J."/>
            <person name="Jabado N."/>
            <person name="Fischer A."/>
            <person name="de Villartay J.P."/>
            <person name="Revy P."/>
        </authorList>
    </citation>
    <scope>FUNCTION</scope>
    <scope>INVOLVEMENT IN BMFS4</scope>
    <scope>VARIANT BMFS4 ARG-656</scope>
</reference>
<reference key="15">
    <citation type="journal article" date="2017" name="J. Allergy Clin. Immunol.">
        <title>Myb-like, SWIRM, and MPN domains 1 (MYSM1) deficiency: Genotoxic stress-associated bone marrow failure and developmental aberrations.</title>
        <authorList>
            <person name="Bahrami E."/>
            <person name="Witzel M."/>
            <person name="Racek T."/>
            <person name="Puchalka J."/>
            <person name="Hollizeck S."/>
            <person name="Greif-Kohistani N."/>
            <person name="Kotlarz D."/>
            <person name="Horny H.P."/>
            <person name="Feederle R."/>
            <person name="Schmidt H."/>
            <person name="Sherkat R."/>
            <person name="Steinemann D."/>
            <person name="Goehring G."/>
            <person name="Schlegelbeger B."/>
            <person name="Albert M.H."/>
            <person name="Al-Herz W."/>
            <person name="Klein C."/>
        </authorList>
    </citation>
    <scope>FUNCTION</scope>
    <scope>INVOLVEMENT IN BMFS4</scope>
    <scope>VARIANT BMFS4 390-GLU--MET-828 DEL</scope>
</reference>
<reference key="16">
    <citation type="journal article" date="2017" name="Nat. Struct. Mol. Biol.">
        <title>Site-specific mapping of the human SUMO proteome reveals co-modification with phosphorylation.</title>
        <authorList>
            <person name="Hendriks I.A."/>
            <person name="Lyon D."/>
            <person name="Young C."/>
            <person name="Jensen L.J."/>
            <person name="Vertegaal A.C."/>
            <person name="Nielsen M.L."/>
        </authorList>
    </citation>
    <scope>SUMOYLATION [LARGE SCALE ANALYSIS] AT LYS-187</scope>
    <scope>IDENTIFICATION BY MASS SPECTROMETRY [LARGE SCALE ANALYSIS]</scope>
</reference>
<reference key="17">
    <citation type="journal article" date="2020" name="Cell Rep.">
        <title>MYSM1 Represses Innate Immunity and Autoimmunity through Suppressing the cGAS-STING Pathway.</title>
        <authorList>
            <person name="Tian M."/>
            <person name="Liu W."/>
            <person name="Zhang Q."/>
            <person name="Huang Y."/>
            <person name="Li W."/>
            <person name="Wang W."/>
            <person name="Zhao P."/>
            <person name="Huang S."/>
            <person name="Song Y."/>
            <person name="Shereen M.A."/>
            <person name="Qin M."/>
            <person name="Liu Y."/>
            <person name="Wu K."/>
            <person name="Wu J."/>
        </authorList>
    </citation>
    <scope>FUNCTION</scope>
    <scope>INDUCTION BY INTRACELLULAR DNA</scope>
    <scope>CATALYTIC ACTIVITY</scope>
</reference>
<reference key="18">
    <citation type="journal article" date="2007" name="J. Mol. Biol.">
        <title>Structural and functional differences of SWIRM domain subtypes.</title>
        <authorList>
            <person name="Yoneyama M."/>
            <person name="Tochio N."/>
            <person name="Umehara T."/>
            <person name="Koshiba S."/>
            <person name="Inoue M."/>
            <person name="Yabuki T."/>
            <person name="Aoki M."/>
            <person name="Seki E."/>
            <person name="Matsuda T."/>
            <person name="Watanabe S."/>
            <person name="Tomo Y."/>
            <person name="Nishimura Y."/>
            <person name="Harada T."/>
            <person name="Terada T."/>
            <person name="Shirouzu M."/>
            <person name="Hayashizaki Y."/>
            <person name="Ohara O."/>
            <person name="Tanaka A."/>
            <person name="Kigawa T."/>
            <person name="Yokoyama S."/>
        </authorList>
    </citation>
    <scope>STRUCTURE BY NMR OF 117-181 AND OF 367-470</scope>
    <scope>INTERACTION WITH DNA</scope>
</reference>
<comment type="function">
    <text evidence="1 8 9 10 12 13 14">Metalloprotease with deubiquitinase activity that plays important regulator roles in hematopoietic stem cell function, blood cell production and immune response (PubMed:24062447, PubMed:26220525, PubMed:28115216). Participates in the normal programming of B-cell responses to antigen after the maturation process (By similarity). Within the cytoplasm, plays critical roles in the repression of innate immunity and autoimmunity (PubMed:33086059). Removes 'Lys-63'-linked polyubiquitins from TRAF3 and TRAF6 complexes (By similarity). Attenuates NOD2-mediated inflammation and tissue injury by promoting 'Lys-63'-linked deubiquitination of RIPK2 component (By similarity). Suppresses the CGAS-STING1 signaling pathway by cleaving STING1 'Lys-63'-linked ubiquitin chains (PubMed:33086059). In the nucleus, acts as a hematopoietic transcription regulator derepressing a range of genes essential for normal stem cell differentiation including EBF1 and PAX5 in B-cells, ID2 in NK-cell progenitor or FLT3 in dendritic cell precursors (PubMed:24062447). Deubiquitinates monoubiquitinated histone H2A, a specific tag for epigenetic transcriptional repression, leading to dissociation of histone H1 from the nucleosome (PubMed:17707232).</text>
</comment>
<comment type="subunit">
    <text evidence="8 10">Component of a large chromatin remodeling complex, at least composed of MYSM1, PCAF, RBM10 and KIF11/TRIP5. Binds histones (PubMed:17707232). Interacts with NFIL3; this interaction is critical for their correct recruitment to the ID2 locus during natural killer cell maturation (PubMed:24062447).</text>
</comment>
<comment type="interaction">
    <interactant intactId="EBI-12262412">
        <id>Q5VVJ2</id>
    </interactant>
    <interactant intactId="EBI-2514004">
        <id>Q5T2T1</id>
        <label>MPP7</label>
    </interactant>
    <organismsDiffer>false</organismsDiffer>
    <experiments>3</experiments>
</comment>
<comment type="subcellular location">
    <subcellularLocation>
        <location evidence="3 8">Nucleus</location>
    </subcellularLocation>
    <subcellularLocation>
        <location evidence="1">Cytoplasm</location>
    </subcellularLocation>
    <text evidence="1">Localizes to the cytoplasm in response to bacterial infection.</text>
</comment>
<comment type="alternative products">
    <event type="alternative splicing"/>
    <isoform>
        <id>Q5VVJ2-1</id>
        <name>1</name>
        <sequence type="displayed"/>
    </isoform>
    <isoform>
        <id>Q5VVJ2-2</id>
        <name>2</name>
        <sequence type="described" ref="VSP_018211"/>
    </isoform>
    <isoform>
        <id>Q5VVJ2-3</id>
        <name>3</name>
        <sequence type="described" ref="VSP_018210"/>
    </isoform>
</comment>
<comment type="induction">
    <text evidence="14">By DNA from viral infection and intracellular DNA.</text>
</comment>
<comment type="domain">
    <text evidence="8">Contains an N-terminal SANT domain that mediates histone/DNA binding, a central SWIRM domain to mediate interaction with chromatin associated proteins, and a C-terminal MPN domain that contains the metalloprotease activity.</text>
</comment>
<comment type="disease" evidence="11 12 13">
    <disease id="DI-05333">
        <name>Bone marrow failure syndrome 4</name>
        <acronym>BMFS4</acronym>
        <description>A form of bone marrow failure syndrome, a heterogeneous group of life-threatening disorders characterized by hematopoietic defects in association with a range of variable extra-hematopoietic manifestations. BMFS4 is characterized by early-onset anemia, leukopenia, decreased B cells, and developmental aberrations including facial dysmorphism, mild skeletal anomalies, and neurodevelopmental delay. BMFS4 inheritance is autosomal recessive.</description>
        <dbReference type="MIM" id="618116"/>
    </disease>
    <text>The disease is caused by variants affecting the gene represented in this entry.</text>
</comment>
<comment type="similarity">
    <text evidence="18">Belongs to the peptidase M67A family. MYSM1 subfamily.</text>
</comment>
<comment type="sequence caution" evidence="18">
    <conflict type="erroneous initiation">
        <sequence resource="EMBL-CDS" id="BAB67808"/>
    </conflict>
</comment>
<comment type="sequence caution" evidence="18">
    <conflict type="erroneous initiation">
        <sequence resource="EMBL-CDS" id="BAG54377"/>
    </conflict>
</comment>
<name>MYSM1_HUMAN</name>